<proteinExistence type="inferred from homology"/>
<feature type="chain" id="PRO_0000287364" description="Type II NADH:quinone oxidoreductase">
    <location>
        <begin position="1"/>
        <end position="402"/>
    </location>
</feature>
<feature type="active site" evidence="1">
    <location>
        <position position="172"/>
    </location>
</feature>
<feature type="binding site" evidence="1">
    <location>
        <begin position="12"/>
        <end position="16"/>
    </location>
    <ligand>
        <name>FAD</name>
        <dbReference type="ChEBI" id="CHEBI:57692"/>
    </ligand>
</feature>
<feature type="binding site" evidence="1">
    <location>
        <begin position="39"/>
        <end position="40"/>
    </location>
    <ligand>
        <name>FAD</name>
        <dbReference type="ChEBI" id="CHEBI:57692"/>
    </ligand>
</feature>
<feature type="binding site" evidence="1">
    <location>
        <position position="83"/>
    </location>
    <ligand>
        <name>FAD</name>
        <dbReference type="ChEBI" id="CHEBI:57692"/>
    </ligand>
</feature>
<feature type="binding site" evidence="1">
    <location>
        <position position="302"/>
    </location>
    <ligand>
        <name>FAD</name>
        <dbReference type="ChEBI" id="CHEBI:57692"/>
    </ligand>
</feature>
<feature type="binding site" evidence="1">
    <location>
        <begin position="319"/>
        <end position="320"/>
    </location>
    <ligand>
        <name>FAD</name>
        <dbReference type="ChEBI" id="CHEBI:57692"/>
    </ligand>
</feature>
<feature type="binding site" evidence="1">
    <location>
        <position position="379"/>
    </location>
    <ligand>
        <name>FAD</name>
        <dbReference type="ChEBI" id="CHEBI:57692"/>
    </ligand>
</feature>
<keyword id="KW-1003">Cell membrane</keyword>
<keyword id="KW-0274">FAD</keyword>
<keyword id="KW-0285">Flavoprotein</keyword>
<keyword id="KW-0472">Membrane</keyword>
<keyword id="KW-0520">NAD</keyword>
<keyword id="KW-0560">Oxidoreductase</keyword>
<organism>
    <name type="scientific">Staphylococcus aureus (strain bovine RF122 / ET3-1)</name>
    <dbReference type="NCBI Taxonomy" id="273036"/>
    <lineage>
        <taxon>Bacteria</taxon>
        <taxon>Bacillati</taxon>
        <taxon>Bacillota</taxon>
        <taxon>Bacilli</taxon>
        <taxon>Bacillales</taxon>
        <taxon>Staphylococcaceae</taxon>
        <taxon>Staphylococcus</taxon>
    </lineage>
</organism>
<protein>
    <recommendedName>
        <fullName evidence="1">Type II NADH:quinone oxidoreductase</fullName>
        <ecNumber evidence="1">1.6.5.9</ecNumber>
    </recommendedName>
    <alternativeName>
        <fullName evidence="1">NDH-2</fullName>
    </alternativeName>
</protein>
<comment type="function">
    <text evidence="1">Alternative, nonproton pumping NADH:quinone oxidoreductase that delivers electrons to the respiratory chain by oxidation of NADH and reduction of quinones, and contributes to the regeneration of NAD(+).</text>
</comment>
<comment type="catalytic activity">
    <reaction evidence="1">
        <text>a quinone + NADH + H(+) = a quinol + NAD(+)</text>
        <dbReference type="Rhea" id="RHEA:46160"/>
        <dbReference type="ChEBI" id="CHEBI:15378"/>
        <dbReference type="ChEBI" id="CHEBI:24646"/>
        <dbReference type="ChEBI" id="CHEBI:57540"/>
        <dbReference type="ChEBI" id="CHEBI:57945"/>
        <dbReference type="ChEBI" id="CHEBI:132124"/>
        <dbReference type="EC" id="1.6.5.9"/>
    </reaction>
</comment>
<comment type="cofactor">
    <cofactor evidence="1">
        <name>FAD</name>
        <dbReference type="ChEBI" id="CHEBI:57692"/>
    </cofactor>
    <text evidence="1">Binds 1 FAD per subunit.</text>
</comment>
<comment type="subcellular location">
    <subcellularLocation>
        <location evidence="1">Cell membrane</location>
    </subcellularLocation>
</comment>
<comment type="similarity">
    <text evidence="2">Belongs to the NADH dehydrogenase family.</text>
</comment>
<name>NDH_STAAB</name>
<sequence length="402" mass="44134">MAQDRKKVLVLGAGYAGLQTVTKLQKTISTEEAEITLINKNEYHYEATWLHEASAGTLNYEDVLYPVESVLKKDKVNFVQAEVTKIDRDAKKVETNQGIYDFDILVVALGFVSETFGIEGMKDHAFQIENVITARELSRHIEDKFANYAASKEKDDNDLSILVGGAGFTGVEFLGELTDRIPELCSKYGVDQNKVKITCVEAAPKMLPMFSEELVNHAVSYLEDRGVEFKIATPIVACNEKGFVVEVDGEKQQLNAGTSVWAAGVRGSKLMEESFEGVKRGRIVTKQDLTINGYDNIFVIGDCSAFIPAGEERPLPTTAQIAMQQGESVAKNIKRILNGESTEEFEYVDRGTVCSLGSHDGVGMVFGKPIAGKKAAFMKKVIDTRAVFKIGGIGLAFKKGKF</sequence>
<gene>
    <name type="ordered locus">SAB0807</name>
</gene>
<accession>Q2YWP9</accession>
<reference key="1">
    <citation type="journal article" date="2007" name="PLoS ONE">
        <title>Molecular correlates of host specialization in Staphylococcus aureus.</title>
        <authorList>
            <person name="Herron-Olson L."/>
            <person name="Fitzgerald J.R."/>
            <person name="Musser J.M."/>
            <person name="Kapur V."/>
        </authorList>
    </citation>
    <scope>NUCLEOTIDE SEQUENCE [LARGE SCALE GENOMIC DNA]</scope>
    <source>
        <strain>bovine RF122 / ET3-1</strain>
    </source>
</reference>
<dbReference type="EC" id="1.6.5.9" evidence="1"/>
<dbReference type="EMBL" id="AJ938182">
    <property type="protein sequence ID" value="CAI80495.1"/>
    <property type="molecule type" value="Genomic_DNA"/>
</dbReference>
<dbReference type="RefSeq" id="WP_000046084.1">
    <property type="nucleotide sequence ID" value="NC_007622.1"/>
</dbReference>
<dbReference type="SMR" id="Q2YWP9"/>
<dbReference type="KEGG" id="sab:SAB0807"/>
<dbReference type="HOGENOM" id="CLU_021377_7_2_9"/>
<dbReference type="GO" id="GO:0005886">
    <property type="term" value="C:plasma membrane"/>
    <property type="evidence" value="ECO:0007669"/>
    <property type="project" value="UniProtKB-SubCell"/>
</dbReference>
<dbReference type="GO" id="GO:0003955">
    <property type="term" value="F:NAD(P)H dehydrogenase (quinone) activity"/>
    <property type="evidence" value="ECO:0007669"/>
    <property type="project" value="TreeGrafter"/>
</dbReference>
<dbReference type="GO" id="GO:0050136">
    <property type="term" value="F:NADH:ubiquinone reductase (non-electrogenic) activity"/>
    <property type="evidence" value="ECO:0007669"/>
    <property type="project" value="UniProtKB-EC"/>
</dbReference>
<dbReference type="GO" id="GO:0019646">
    <property type="term" value="P:aerobic electron transport chain"/>
    <property type="evidence" value="ECO:0007669"/>
    <property type="project" value="TreeGrafter"/>
</dbReference>
<dbReference type="FunFam" id="3.50.50.100:FF:000004">
    <property type="entry name" value="Pyridine nucleotide-disulfide oxidoreductase"/>
    <property type="match status" value="1"/>
</dbReference>
<dbReference type="Gene3D" id="3.50.50.100">
    <property type="match status" value="1"/>
</dbReference>
<dbReference type="InterPro" id="IPR036188">
    <property type="entry name" value="FAD/NAD-bd_sf"/>
</dbReference>
<dbReference type="InterPro" id="IPR023753">
    <property type="entry name" value="FAD/NAD-binding_dom"/>
</dbReference>
<dbReference type="InterPro" id="IPR051169">
    <property type="entry name" value="NADH-Q_oxidoreductase"/>
</dbReference>
<dbReference type="PANTHER" id="PTHR42913:SF3">
    <property type="entry name" value="64 KDA MITOCHONDRIAL NADH DEHYDROGENASE (EUROFUNG)"/>
    <property type="match status" value="1"/>
</dbReference>
<dbReference type="PANTHER" id="PTHR42913">
    <property type="entry name" value="APOPTOSIS-INDUCING FACTOR 1"/>
    <property type="match status" value="1"/>
</dbReference>
<dbReference type="Pfam" id="PF07992">
    <property type="entry name" value="Pyr_redox_2"/>
    <property type="match status" value="1"/>
</dbReference>
<dbReference type="PRINTS" id="PR00368">
    <property type="entry name" value="FADPNR"/>
</dbReference>
<dbReference type="SUPFAM" id="SSF51905">
    <property type="entry name" value="FAD/NAD(P)-binding domain"/>
    <property type="match status" value="2"/>
</dbReference>
<evidence type="ECO:0000250" key="1">
    <source>
        <dbReference type="UniProtKB" id="Q2FZV7"/>
    </source>
</evidence>
<evidence type="ECO:0000305" key="2"/>